<protein>
    <recommendedName>
        <fullName evidence="1">Diaminopimelate epimerase</fullName>
        <shortName evidence="1">DAP epimerase</shortName>
        <ecNumber evidence="1">5.1.1.7</ecNumber>
    </recommendedName>
    <alternativeName>
        <fullName evidence="1">PLP-independent amino acid racemase</fullName>
    </alternativeName>
</protein>
<sequence length="277" mass="29433">MHIRFTKMHGLGNDFVVIDATRTPVDLTPARVKAIADRHFGVGCDQLLVVEPPGSDEVDFRYRIFNADGGEVEQCGNGARCFVRFVHDKGLTDKREIRVETRAGVIAPALRPDGLVSVDMGVPELSPARIPFVSDSDAWVQPLQLAEDTVAITAVSMGNPHAVQVVADVDTAPVARQGAEIECHPRFPARVNAGFMQVVDAGHIRLRVFERGAGETLACGTGACAAVVAGIGRGLLVSPVRVETRGGELEIAWAGPGTPVVMTGPAVTVFEGELELP</sequence>
<evidence type="ECO:0000255" key="1">
    <source>
        <dbReference type="HAMAP-Rule" id="MF_00197"/>
    </source>
</evidence>
<gene>
    <name evidence="1" type="primary">dapF</name>
    <name type="ordered locus">azo0594</name>
</gene>
<comment type="function">
    <text evidence="1">Catalyzes the stereoinversion of LL-2,6-diaminopimelate (L,L-DAP) to meso-diaminopimelate (meso-DAP), a precursor of L-lysine and an essential component of the bacterial peptidoglycan.</text>
</comment>
<comment type="catalytic activity">
    <reaction evidence="1">
        <text>(2S,6S)-2,6-diaminopimelate = meso-2,6-diaminopimelate</text>
        <dbReference type="Rhea" id="RHEA:15393"/>
        <dbReference type="ChEBI" id="CHEBI:57609"/>
        <dbReference type="ChEBI" id="CHEBI:57791"/>
        <dbReference type="EC" id="5.1.1.7"/>
    </reaction>
</comment>
<comment type="pathway">
    <text evidence="1">Amino-acid biosynthesis; L-lysine biosynthesis via DAP pathway; DL-2,6-diaminopimelate from LL-2,6-diaminopimelate: step 1/1.</text>
</comment>
<comment type="subunit">
    <text evidence="1">Homodimer.</text>
</comment>
<comment type="subcellular location">
    <subcellularLocation>
        <location evidence="1">Cytoplasm</location>
    </subcellularLocation>
</comment>
<comment type="similarity">
    <text evidence="1">Belongs to the diaminopimelate epimerase family.</text>
</comment>
<reference key="1">
    <citation type="journal article" date="2006" name="Nat. Biotechnol.">
        <title>Complete genome of the mutualistic, N2-fixing grass endophyte Azoarcus sp. strain BH72.</title>
        <authorList>
            <person name="Krause A."/>
            <person name="Ramakumar A."/>
            <person name="Bartels D."/>
            <person name="Battistoni F."/>
            <person name="Bekel T."/>
            <person name="Boch J."/>
            <person name="Boehm M."/>
            <person name="Friedrich F."/>
            <person name="Hurek T."/>
            <person name="Krause L."/>
            <person name="Linke B."/>
            <person name="McHardy A.C."/>
            <person name="Sarkar A."/>
            <person name="Schneiker S."/>
            <person name="Syed A.A."/>
            <person name="Thauer R."/>
            <person name="Vorhoelter F.-J."/>
            <person name="Weidner S."/>
            <person name="Puehler A."/>
            <person name="Reinhold-Hurek B."/>
            <person name="Kaiser O."/>
            <person name="Goesmann A."/>
        </authorList>
    </citation>
    <scope>NUCLEOTIDE SEQUENCE [LARGE SCALE GENOMIC DNA]</scope>
    <source>
        <strain>BH72</strain>
    </source>
</reference>
<accession>A1K306</accession>
<dbReference type="EC" id="5.1.1.7" evidence="1"/>
<dbReference type="EMBL" id="AM406670">
    <property type="protein sequence ID" value="CAL93211.1"/>
    <property type="molecule type" value="Genomic_DNA"/>
</dbReference>
<dbReference type="RefSeq" id="WP_011764329.1">
    <property type="nucleotide sequence ID" value="NC_008702.1"/>
</dbReference>
<dbReference type="SMR" id="A1K306"/>
<dbReference type="STRING" id="62928.azo0594"/>
<dbReference type="KEGG" id="azo:azo0594"/>
<dbReference type="eggNOG" id="COG0253">
    <property type="taxonomic scope" value="Bacteria"/>
</dbReference>
<dbReference type="HOGENOM" id="CLU_053306_1_1_4"/>
<dbReference type="UniPathway" id="UPA00034">
    <property type="reaction ID" value="UER00025"/>
</dbReference>
<dbReference type="Proteomes" id="UP000002588">
    <property type="component" value="Chromosome"/>
</dbReference>
<dbReference type="GO" id="GO:0005829">
    <property type="term" value="C:cytosol"/>
    <property type="evidence" value="ECO:0007669"/>
    <property type="project" value="TreeGrafter"/>
</dbReference>
<dbReference type="GO" id="GO:0008837">
    <property type="term" value="F:diaminopimelate epimerase activity"/>
    <property type="evidence" value="ECO:0007669"/>
    <property type="project" value="UniProtKB-UniRule"/>
</dbReference>
<dbReference type="GO" id="GO:0009089">
    <property type="term" value="P:lysine biosynthetic process via diaminopimelate"/>
    <property type="evidence" value="ECO:0007669"/>
    <property type="project" value="UniProtKB-UniRule"/>
</dbReference>
<dbReference type="FunFam" id="3.10.310.10:FF:000001">
    <property type="entry name" value="Diaminopimelate epimerase"/>
    <property type="match status" value="1"/>
</dbReference>
<dbReference type="Gene3D" id="3.10.310.10">
    <property type="entry name" value="Diaminopimelate Epimerase, Chain A, domain 1"/>
    <property type="match status" value="2"/>
</dbReference>
<dbReference type="HAMAP" id="MF_00197">
    <property type="entry name" value="DAP_epimerase"/>
    <property type="match status" value="1"/>
</dbReference>
<dbReference type="InterPro" id="IPR018510">
    <property type="entry name" value="DAP_epimerase_AS"/>
</dbReference>
<dbReference type="InterPro" id="IPR001653">
    <property type="entry name" value="DAP_epimerase_DapF"/>
</dbReference>
<dbReference type="NCBIfam" id="TIGR00652">
    <property type="entry name" value="DapF"/>
    <property type="match status" value="1"/>
</dbReference>
<dbReference type="PANTHER" id="PTHR31689:SF0">
    <property type="entry name" value="DIAMINOPIMELATE EPIMERASE"/>
    <property type="match status" value="1"/>
</dbReference>
<dbReference type="PANTHER" id="PTHR31689">
    <property type="entry name" value="DIAMINOPIMELATE EPIMERASE, CHLOROPLASTIC"/>
    <property type="match status" value="1"/>
</dbReference>
<dbReference type="Pfam" id="PF01678">
    <property type="entry name" value="DAP_epimerase"/>
    <property type="match status" value="2"/>
</dbReference>
<dbReference type="SUPFAM" id="SSF54506">
    <property type="entry name" value="Diaminopimelate epimerase-like"/>
    <property type="match status" value="1"/>
</dbReference>
<dbReference type="PROSITE" id="PS01326">
    <property type="entry name" value="DAP_EPIMERASE"/>
    <property type="match status" value="1"/>
</dbReference>
<feature type="chain" id="PRO_1000011833" description="Diaminopimelate epimerase">
    <location>
        <begin position="1"/>
        <end position="277"/>
    </location>
</feature>
<feature type="active site" description="Proton donor" evidence="1">
    <location>
        <position position="75"/>
    </location>
</feature>
<feature type="active site" description="Proton acceptor" evidence="1">
    <location>
        <position position="219"/>
    </location>
</feature>
<feature type="binding site" evidence="1">
    <location>
        <position position="13"/>
    </location>
    <ligand>
        <name>substrate</name>
    </ligand>
</feature>
<feature type="binding site" evidence="1">
    <location>
        <position position="46"/>
    </location>
    <ligand>
        <name>substrate</name>
    </ligand>
</feature>
<feature type="binding site" evidence="1">
    <location>
        <position position="66"/>
    </location>
    <ligand>
        <name>substrate</name>
    </ligand>
</feature>
<feature type="binding site" evidence="1">
    <location>
        <begin position="76"/>
        <end position="77"/>
    </location>
    <ligand>
        <name>substrate</name>
    </ligand>
</feature>
<feature type="binding site" evidence="1">
    <location>
        <position position="159"/>
    </location>
    <ligand>
        <name>substrate</name>
    </ligand>
</feature>
<feature type="binding site" evidence="1">
    <location>
        <position position="192"/>
    </location>
    <ligand>
        <name>substrate</name>
    </ligand>
</feature>
<feature type="binding site" evidence="1">
    <location>
        <begin position="210"/>
        <end position="211"/>
    </location>
    <ligand>
        <name>substrate</name>
    </ligand>
</feature>
<feature type="binding site" evidence="1">
    <location>
        <begin position="220"/>
        <end position="221"/>
    </location>
    <ligand>
        <name>substrate</name>
    </ligand>
</feature>
<feature type="site" description="Could be important to modulate the pK values of the two catalytic cysteine residues" evidence="1">
    <location>
        <position position="161"/>
    </location>
</feature>
<feature type="site" description="Could be important to modulate the pK values of the two catalytic cysteine residues" evidence="1">
    <location>
        <position position="210"/>
    </location>
</feature>
<organism>
    <name type="scientific">Azoarcus sp. (strain BH72)</name>
    <dbReference type="NCBI Taxonomy" id="418699"/>
    <lineage>
        <taxon>Bacteria</taxon>
        <taxon>Pseudomonadati</taxon>
        <taxon>Pseudomonadota</taxon>
        <taxon>Betaproteobacteria</taxon>
        <taxon>Rhodocyclales</taxon>
        <taxon>Zoogloeaceae</taxon>
        <taxon>Azoarcus</taxon>
    </lineage>
</organism>
<proteinExistence type="inferred from homology"/>
<keyword id="KW-0028">Amino-acid biosynthesis</keyword>
<keyword id="KW-0963">Cytoplasm</keyword>
<keyword id="KW-0413">Isomerase</keyword>
<keyword id="KW-0457">Lysine biosynthesis</keyword>
<keyword id="KW-1185">Reference proteome</keyword>
<name>DAPF_AZOSB</name>